<accession>Q6E0U3</accession>
<accession>Q9L5X7</accession>
<keyword id="KW-0963">Cytoplasm</keyword>
<keyword id="KW-0342">GTP-binding</keyword>
<keyword id="KW-0378">Hydrolase</keyword>
<keyword id="KW-0460">Magnesium</keyword>
<keyword id="KW-0479">Metal-binding</keyword>
<keyword id="KW-0547">Nucleotide-binding</keyword>
<proteinExistence type="evidence at protein level"/>
<organism>
    <name type="scientific">Vibrio harveyi</name>
    <name type="common">Beneckea harveyi</name>
    <dbReference type="NCBI Taxonomy" id="669"/>
    <lineage>
        <taxon>Bacteria</taxon>
        <taxon>Pseudomonadati</taxon>
        <taxon>Pseudomonadota</taxon>
        <taxon>Gammaproteobacteria</taxon>
        <taxon>Vibrionales</taxon>
        <taxon>Vibrionaceae</taxon>
        <taxon>Vibrio</taxon>
    </lineage>
</organism>
<name>OBG_VIBHA</name>
<comment type="function">
    <text>Overexpression protects cells against UV damage.</text>
</comment>
<comment type="function">
    <text evidence="1">An essential GTPase which binds GTP, GDP and possibly (p)ppGpp with moderate affinity, with high nucleotide exchange rates and a fairly low GTP hydrolysis rate. Plays a role in control of the cell cycle, stress response, ribosome biogenesis and in those bacteria that undergo differentiation, in morphogenesis control.</text>
</comment>
<comment type="cofactor">
    <cofactor evidence="1">
        <name>Mg(2+)</name>
        <dbReference type="ChEBI" id="CHEBI:18420"/>
    </cofactor>
</comment>
<comment type="subunit">
    <text evidence="1">Monomer.</text>
</comment>
<comment type="subcellular location">
    <subcellularLocation>
        <location evidence="1">Cytoplasm</location>
    </subcellularLocation>
</comment>
<comment type="induction">
    <text evidence="5">Induced in a dose-dependent manner by UV irradiation (at protein level).</text>
</comment>
<comment type="disruption phenotype">
    <text evidence="4">Deletion of all but the first 99 amino acids confers multiple defects in several cellular processes, including increased sensitivity to UV irradiation. It is not clear if this is a complete disruption or not, as in C.crescentus and E.coli this gene cannot be disrupted.</text>
</comment>
<comment type="similarity">
    <text evidence="1">Belongs to the TRAFAC class OBG-HflX-like GTPase superfamily. OBG GTPase family.</text>
</comment>
<gene>
    <name evidence="6" type="primary">cgtA</name>
    <name type="synonym">obg</name>
</gene>
<reference key="1">
    <citation type="submission" date="2004-05" db="EMBL/GenBank/DDBJ databases">
        <title>Sequence of Vibrio harveyi cgtA gene.</title>
        <authorList>
            <person name="Sikora A.E."/>
        </authorList>
    </citation>
    <scope>NUCLEOTIDE SEQUENCE [GENOMIC DNA]</scope>
    <source>
        <strain>BB7</strain>
    </source>
</reference>
<reference key="2">
    <citation type="journal article" date="2001" name="Microbiology">
        <title>A Vibrio harveyi insertional mutant in the cgtA (obg, yhbZ) gene, whose homologues are present in diverse organisms ranging from bacteria to humans and are essential genes in many bacterial species.</title>
        <authorList>
            <person name="Czyz A."/>
            <person name="Zielke R."/>
            <person name="Konopa G."/>
            <person name="Wegrzyn G."/>
        </authorList>
    </citation>
    <scope>NUCLEOTIDE SEQUENCE [GENOMIC DNA] OF 1-99</scope>
    <scope>DISRUPTION PHENOTYPE</scope>
    <source>
        <strain>BB7</strain>
    </source>
</reference>
<reference key="3">
    <citation type="journal article" date="2003" name="Microbiology">
        <title>Involvement of the cgtA gene function in stimulation of DNA repair in Escherichia coli and Vibrio harveyi.</title>
        <authorList>
            <person name="Zielke R."/>
            <person name="Sikora A."/>
            <person name="Dutkiewicz R."/>
            <person name="Wegrzyn G."/>
            <person name="Czyz A."/>
        </authorList>
    </citation>
    <scope>INDUCTION</scope>
    <source>
        <strain>BB7</strain>
    </source>
</reference>
<reference key="4">
    <citation type="journal article" date="2005" name="Acta Biochim. Pol.">
        <title>The Obg subfamily of bacterial GTP-binding proteins: essential proteins of largely unknown functions that are evolutionarily conserved from bacteria to humans.</title>
        <authorList>
            <person name="Czyz A."/>
            <person name="Wegrzyn G."/>
        </authorList>
    </citation>
    <scope>REVIEW</scope>
</reference>
<reference key="5">
    <citation type="journal article" date="2005" name="Dev. Cell">
        <title>Obg/CtgA, a signaling protein that controls replication, translation, and morphological development?</title>
        <authorList>
            <person name="Michel B."/>
        </authorList>
    </citation>
    <scope>REVIEW</scope>
</reference>
<feature type="chain" id="PRO_0000386380" description="GTPase Obg/CgtA">
    <location>
        <begin position="1"/>
        <end position="391"/>
    </location>
</feature>
<feature type="domain" description="Obg" evidence="2">
    <location>
        <begin position="1"/>
        <end position="159"/>
    </location>
</feature>
<feature type="domain" description="OBG-type G" evidence="1">
    <location>
        <begin position="160"/>
        <end position="333"/>
    </location>
</feature>
<feature type="region of interest" description="Disordered" evidence="3">
    <location>
        <begin position="367"/>
        <end position="391"/>
    </location>
</feature>
<feature type="compositionally biased region" description="Acidic residues" evidence="3">
    <location>
        <begin position="367"/>
        <end position="383"/>
    </location>
</feature>
<feature type="binding site" evidence="1">
    <location>
        <begin position="166"/>
        <end position="173"/>
    </location>
    <ligand>
        <name>GTP</name>
        <dbReference type="ChEBI" id="CHEBI:37565"/>
    </ligand>
</feature>
<feature type="binding site" evidence="1">
    <location>
        <position position="173"/>
    </location>
    <ligand>
        <name>Mg(2+)</name>
        <dbReference type="ChEBI" id="CHEBI:18420"/>
    </ligand>
</feature>
<feature type="binding site" evidence="1">
    <location>
        <begin position="191"/>
        <end position="195"/>
    </location>
    <ligand>
        <name>GTP</name>
        <dbReference type="ChEBI" id="CHEBI:37565"/>
    </ligand>
</feature>
<feature type="binding site" evidence="1">
    <location>
        <position position="193"/>
    </location>
    <ligand>
        <name>Mg(2+)</name>
        <dbReference type="ChEBI" id="CHEBI:18420"/>
    </ligand>
</feature>
<feature type="binding site" evidence="1">
    <location>
        <begin position="213"/>
        <end position="216"/>
    </location>
    <ligand>
        <name>GTP</name>
        <dbReference type="ChEBI" id="CHEBI:37565"/>
    </ligand>
</feature>
<feature type="binding site" evidence="1">
    <location>
        <begin position="283"/>
        <end position="286"/>
    </location>
    <ligand>
        <name>GTP</name>
        <dbReference type="ChEBI" id="CHEBI:37565"/>
    </ligand>
</feature>
<feature type="binding site" evidence="1">
    <location>
        <begin position="314"/>
        <end position="316"/>
    </location>
    <ligand>
        <name>GTP</name>
        <dbReference type="ChEBI" id="CHEBI:37565"/>
    </ligand>
</feature>
<evidence type="ECO:0000255" key="1">
    <source>
        <dbReference type="HAMAP-Rule" id="MF_01454"/>
    </source>
</evidence>
<evidence type="ECO:0000255" key="2">
    <source>
        <dbReference type="PROSITE-ProRule" id="PRU01231"/>
    </source>
</evidence>
<evidence type="ECO:0000256" key="3">
    <source>
        <dbReference type="SAM" id="MobiDB-lite"/>
    </source>
</evidence>
<evidence type="ECO:0000269" key="4">
    <source>
    </source>
</evidence>
<evidence type="ECO:0000269" key="5">
    <source>
    </source>
</evidence>
<evidence type="ECO:0000303" key="6">
    <source>
    </source>
</evidence>
<dbReference type="EC" id="3.6.5.-" evidence="1"/>
<dbReference type="EMBL" id="AY623050">
    <property type="protein sequence ID" value="AAT67594.1"/>
    <property type="molecule type" value="Genomic_DNA"/>
</dbReference>
<dbReference type="EMBL" id="AF247677">
    <property type="protein sequence ID" value="AAF66421.1"/>
    <property type="molecule type" value="Genomic_DNA"/>
</dbReference>
<dbReference type="SMR" id="Q6E0U3"/>
<dbReference type="STRING" id="669.AL538_11165"/>
<dbReference type="GO" id="GO:0005737">
    <property type="term" value="C:cytoplasm"/>
    <property type="evidence" value="ECO:0007669"/>
    <property type="project" value="UniProtKB-SubCell"/>
</dbReference>
<dbReference type="GO" id="GO:0005525">
    <property type="term" value="F:GTP binding"/>
    <property type="evidence" value="ECO:0007669"/>
    <property type="project" value="UniProtKB-UniRule"/>
</dbReference>
<dbReference type="GO" id="GO:0003924">
    <property type="term" value="F:GTPase activity"/>
    <property type="evidence" value="ECO:0007669"/>
    <property type="project" value="UniProtKB-UniRule"/>
</dbReference>
<dbReference type="GO" id="GO:0000287">
    <property type="term" value="F:magnesium ion binding"/>
    <property type="evidence" value="ECO:0007669"/>
    <property type="project" value="InterPro"/>
</dbReference>
<dbReference type="GO" id="GO:0042254">
    <property type="term" value="P:ribosome biogenesis"/>
    <property type="evidence" value="ECO:0007669"/>
    <property type="project" value="UniProtKB-UniRule"/>
</dbReference>
<dbReference type="CDD" id="cd01898">
    <property type="entry name" value="Obg"/>
    <property type="match status" value="1"/>
</dbReference>
<dbReference type="FunFam" id="2.70.210.12:FF:000001">
    <property type="entry name" value="GTPase Obg"/>
    <property type="match status" value="1"/>
</dbReference>
<dbReference type="FunFam" id="3.40.50.300:FF:000185">
    <property type="entry name" value="GTPase Obg"/>
    <property type="match status" value="1"/>
</dbReference>
<dbReference type="Gene3D" id="2.70.210.12">
    <property type="entry name" value="GTP1/OBG domain"/>
    <property type="match status" value="1"/>
</dbReference>
<dbReference type="Gene3D" id="3.40.50.300">
    <property type="entry name" value="P-loop containing nucleotide triphosphate hydrolases"/>
    <property type="match status" value="1"/>
</dbReference>
<dbReference type="HAMAP" id="MF_01454">
    <property type="entry name" value="GTPase_Obg"/>
    <property type="match status" value="1"/>
</dbReference>
<dbReference type="InterPro" id="IPR031167">
    <property type="entry name" value="G_OBG"/>
</dbReference>
<dbReference type="InterPro" id="IPR006073">
    <property type="entry name" value="GTP-bd"/>
</dbReference>
<dbReference type="InterPro" id="IPR014100">
    <property type="entry name" value="GTP-bd_Obg/CgtA"/>
</dbReference>
<dbReference type="InterPro" id="IPR006074">
    <property type="entry name" value="GTP1-OBG_CS"/>
</dbReference>
<dbReference type="InterPro" id="IPR006169">
    <property type="entry name" value="GTP1_OBG_dom"/>
</dbReference>
<dbReference type="InterPro" id="IPR036726">
    <property type="entry name" value="GTP1_OBG_dom_sf"/>
</dbReference>
<dbReference type="InterPro" id="IPR045086">
    <property type="entry name" value="OBG_GTPase"/>
</dbReference>
<dbReference type="InterPro" id="IPR027417">
    <property type="entry name" value="P-loop_NTPase"/>
</dbReference>
<dbReference type="NCBIfam" id="TIGR02729">
    <property type="entry name" value="Obg_CgtA"/>
    <property type="match status" value="1"/>
</dbReference>
<dbReference type="NCBIfam" id="NF008955">
    <property type="entry name" value="PRK12297.1"/>
    <property type="match status" value="1"/>
</dbReference>
<dbReference type="NCBIfam" id="NF008956">
    <property type="entry name" value="PRK12299.1"/>
    <property type="match status" value="1"/>
</dbReference>
<dbReference type="PANTHER" id="PTHR11702">
    <property type="entry name" value="DEVELOPMENTALLY REGULATED GTP-BINDING PROTEIN-RELATED"/>
    <property type="match status" value="1"/>
</dbReference>
<dbReference type="PANTHER" id="PTHR11702:SF31">
    <property type="entry name" value="MITOCHONDRIAL RIBOSOME-ASSOCIATED GTPASE 2"/>
    <property type="match status" value="1"/>
</dbReference>
<dbReference type="Pfam" id="PF01018">
    <property type="entry name" value="GTP1_OBG"/>
    <property type="match status" value="1"/>
</dbReference>
<dbReference type="Pfam" id="PF01926">
    <property type="entry name" value="MMR_HSR1"/>
    <property type="match status" value="1"/>
</dbReference>
<dbReference type="PIRSF" id="PIRSF002401">
    <property type="entry name" value="GTP_bd_Obg/CgtA"/>
    <property type="match status" value="1"/>
</dbReference>
<dbReference type="PRINTS" id="PR00326">
    <property type="entry name" value="GTP1OBG"/>
</dbReference>
<dbReference type="SUPFAM" id="SSF82051">
    <property type="entry name" value="Obg GTP-binding protein N-terminal domain"/>
    <property type="match status" value="1"/>
</dbReference>
<dbReference type="SUPFAM" id="SSF52540">
    <property type="entry name" value="P-loop containing nucleoside triphosphate hydrolases"/>
    <property type="match status" value="1"/>
</dbReference>
<dbReference type="PROSITE" id="PS51710">
    <property type="entry name" value="G_OBG"/>
    <property type="match status" value="1"/>
</dbReference>
<dbReference type="PROSITE" id="PS00905">
    <property type="entry name" value="GTP1_OBG"/>
    <property type="match status" value="1"/>
</dbReference>
<dbReference type="PROSITE" id="PS51883">
    <property type="entry name" value="OBG"/>
    <property type="match status" value="1"/>
</dbReference>
<sequence>MKFVDEAVVKVQAGDGGSGVVSFWREKFITKGGPDGGDGGDGGDVYIQADENLNTLIDYRFQRFYEAERGENGRGGNCTGKRGKDITLRVPVGTRAVDIHTNEIVAEVAEHGKKVMVAKGGWHGLGNTRFKSSVNRAPRQRTLGTKGEIREIRLELLLLADVGMLGLPNAGKSTFIRAVSAAKPKVADYPFTTLIPSLGVVSVVPEKSFVVADIPGLIEGAADGAGLGIRFLKHLERCRVLLHMIDIMPIDQSDPIQNALTIIDELEQYSEKLAGKPRWLVFNKTDLMPEEEANEKIQEILDALGWEDEYFKISAINRNGTKELCYKLADFMENLPREEEEVAEEDKVNFMWDDYHKDAIAGKDVITEEDDDDWDDCDDEDDDGHVVYVRD</sequence>
<protein>
    <recommendedName>
        <fullName evidence="1">GTPase Obg/CgtA</fullName>
        <ecNumber evidence="1">3.6.5.-</ecNumber>
    </recommendedName>
    <alternativeName>
        <fullName evidence="6">CgtA</fullName>
    </alternativeName>
    <alternativeName>
        <fullName evidence="1">GTP-binding protein Obg</fullName>
    </alternativeName>
</protein>